<protein>
    <recommendedName>
        <fullName>Erythromycin biosynthesis sensory transduction protein EryC1</fullName>
    </recommendedName>
</protein>
<reference key="1">
    <citation type="journal article" date="1989" name="Mol. Microbiol.">
        <title>Molecular characterization of a gene from Saccharopolyspora erythraea (Streptomyces erythraeus) which is involved in erythromycin biosynthesis.</title>
        <authorList>
            <person name="Dhillon N."/>
            <person name="Hale R.S."/>
            <person name="Cortes J."/>
            <person name="Leadlay P.F."/>
        </authorList>
    </citation>
    <scope>NUCLEOTIDE SEQUENCE [GENOMIC DNA]</scope>
    <source>
        <strain>ATCC 11635 / DSM 40517 / JCM 4748 / NBRC 13426 / NCIMB 8594 / NRRL 2338</strain>
    </source>
</reference>
<reference key="2">
    <citation type="journal article" date="2007" name="Nat. Biotechnol.">
        <title>Complete genome sequence of the erythromycin-producing bacterium Saccharopolyspora erythraea NRRL23338.</title>
        <authorList>
            <person name="Oliynyk M."/>
            <person name="Samborskyy M."/>
            <person name="Lester J.B."/>
            <person name="Mironenko T."/>
            <person name="Scott N."/>
            <person name="Dickens S."/>
            <person name="Haydock S.F."/>
            <person name="Leadlay P.F."/>
        </authorList>
    </citation>
    <scope>NUCLEOTIDE SEQUENCE [LARGE SCALE GENOMIC DNA]</scope>
    <source>
        <strain>ATCC 11635 / DSM 40517 / JCM 4748 / NBRC 13426 / NCIMB 8594 / NRRL 2338</strain>
    </source>
</reference>
<feature type="chain" id="PRO_0000110012" description="Erythromycin biosynthesis sensory transduction protein EryC1">
    <location>
        <begin position="1"/>
        <end position="366"/>
    </location>
</feature>
<feature type="DNA-binding region" description="H-T-H motif" evidence="2">
    <location>
        <begin position="160"/>
        <end position="179"/>
    </location>
</feature>
<feature type="region of interest" description="Hydrophobic">
    <location>
        <begin position="53"/>
        <end position="158"/>
    </location>
</feature>
<feature type="modified residue" description="N6-(pyridoxal phosphate)lysine" evidence="1">
    <location>
        <position position="186"/>
    </location>
</feature>
<feature type="sequence conflict" description="In Ref. 1; CAA33548." evidence="3" ref="1">
    <original>L</original>
    <variation>V</variation>
    <location>
        <position position="69"/>
    </location>
</feature>
<feature type="sequence conflict" description="In Ref. 1; CAA33548." evidence="3" ref="1">
    <original>AVSR</original>
    <variation>GVP</variation>
    <location>
        <begin position="92"/>
        <end position="95"/>
    </location>
</feature>
<gene>
    <name type="primary">eryC1</name>
    <name type="synonym">eryCI</name>
    <name type="ordered locus">SACE_0734</name>
</gene>
<keyword id="KW-0045">Antibiotic biosynthesis</keyword>
<keyword id="KW-1003">Cell membrane</keyword>
<keyword id="KW-0238">DNA-binding</keyword>
<keyword id="KW-0472">Membrane</keyword>
<keyword id="KW-0663">Pyridoxal phosphate</keyword>
<keyword id="KW-1185">Reference proteome</keyword>
<keyword id="KW-0804">Transcription</keyword>
<keyword id="KW-0805">Transcription regulation</keyword>
<keyword id="KW-0902">Two-component regulatory system</keyword>
<sequence length="366" mass="39410">MDVPFLDLQAAYLELRSDIDQACRRVLGSGWYLHGPENEAFEAEFAAYCENAHCVTVGSGCDALELSLLALGVGQGDEVIVPSHTFIATWLAVSRVGAVPVPVEPEGVSHTLDPALVEQAITPRTAAILPVHLYGHPADLDALRAIADRHGLALVEDVAQAVGARHRGHRVGAGSNAAAFSFYPGKNLGALGDGGAVVTTDPALAERIRLLRNYGSKQKYVHEVRGTNARLDELQAAVLRVKLRHLDDWNARRTTLAQHYQTELKDVPGITLPETHPWADSAWHLFVLRCENRDHLQRHLTDAGVQTLIHYPTPVHLSPAYADLGLPPGSFPVAESLAGEVLSLPIGPHLSREAADHVIATLKAGA</sequence>
<accession>P14290</accession>
<accession>A4F7Q1</accession>
<name>ERBS_SACEN</name>
<organism>
    <name type="scientific">Saccharopolyspora erythraea (strain ATCC 11635 / DSM 40517 / JCM 4748 / NBRC 13426 / NCIMB 8594 / NRRL 2338)</name>
    <dbReference type="NCBI Taxonomy" id="405948"/>
    <lineage>
        <taxon>Bacteria</taxon>
        <taxon>Bacillati</taxon>
        <taxon>Actinomycetota</taxon>
        <taxon>Actinomycetes</taxon>
        <taxon>Pseudonocardiales</taxon>
        <taxon>Pseudonocardiaceae</taxon>
        <taxon>Saccharopolyspora</taxon>
    </lineage>
</organism>
<comment type="function">
    <text evidence="3">Sensor protein that transfers the signal of environmental stimuli to the regulatory region of target genes to activate or repress transcription of erythromycin biosynthesis genes.</text>
</comment>
<comment type="subcellular location">
    <subcellularLocation>
        <location evidence="3">Cell membrane</location>
        <topology evidence="3">Peripheral membrane protein</topology>
    </subcellularLocation>
</comment>
<comment type="similarity">
    <text evidence="3">Belongs to the DegT/DnrJ/EryC1 family.</text>
</comment>
<proteinExistence type="inferred from homology"/>
<dbReference type="EMBL" id="X15541">
    <property type="protein sequence ID" value="CAA33548.1"/>
    <property type="molecule type" value="Genomic_DNA"/>
</dbReference>
<dbReference type="EMBL" id="AM420293">
    <property type="protein sequence ID" value="CAM00075.1"/>
    <property type="molecule type" value="Genomic_DNA"/>
</dbReference>
<dbReference type="PIR" id="S06725">
    <property type="entry name" value="S06725"/>
</dbReference>
<dbReference type="RefSeq" id="WP_009950389.1">
    <property type="nucleotide sequence ID" value="NC_009142.1"/>
</dbReference>
<dbReference type="SMR" id="P14290"/>
<dbReference type="STRING" id="405948.SACE_0734"/>
<dbReference type="KEGG" id="sen:SACE_0734"/>
<dbReference type="eggNOG" id="COG0399">
    <property type="taxonomic scope" value="Bacteria"/>
</dbReference>
<dbReference type="HOGENOM" id="CLU_033332_6_0_11"/>
<dbReference type="OrthoDB" id="5342089at2"/>
<dbReference type="BioCyc" id="MetaCyc:MONOMER-17089"/>
<dbReference type="Proteomes" id="UP000006728">
    <property type="component" value="Chromosome"/>
</dbReference>
<dbReference type="GO" id="GO:0005886">
    <property type="term" value="C:plasma membrane"/>
    <property type="evidence" value="ECO:0007669"/>
    <property type="project" value="UniProtKB-SubCell"/>
</dbReference>
<dbReference type="GO" id="GO:0003677">
    <property type="term" value="F:DNA binding"/>
    <property type="evidence" value="ECO:0007669"/>
    <property type="project" value="UniProtKB-KW"/>
</dbReference>
<dbReference type="GO" id="GO:0030170">
    <property type="term" value="F:pyridoxal phosphate binding"/>
    <property type="evidence" value="ECO:0007669"/>
    <property type="project" value="TreeGrafter"/>
</dbReference>
<dbReference type="GO" id="GO:0008483">
    <property type="term" value="F:transaminase activity"/>
    <property type="evidence" value="ECO:0007669"/>
    <property type="project" value="TreeGrafter"/>
</dbReference>
<dbReference type="GO" id="GO:0017000">
    <property type="term" value="P:antibiotic biosynthetic process"/>
    <property type="evidence" value="ECO:0007669"/>
    <property type="project" value="UniProtKB-KW"/>
</dbReference>
<dbReference type="GO" id="GO:0000160">
    <property type="term" value="P:phosphorelay signal transduction system"/>
    <property type="evidence" value="ECO:0007669"/>
    <property type="project" value="UniProtKB-KW"/>
</dbReference>
<dbReference type="GO" id="GO:0000271">
    <property type="term" value="P:polysaccharide biosynthetic process"/>
    <property type="evidence" value="ECO:0007669"/>
    <property type="project" value="TreeGrafter"/>
</dbReference>
<dbReference type="CDD" id="cd00616">
    <property type="entry name" value="AHBA_syn"/>
    <property type="match status" value="1"/>
</dbReference>
<dbReference type="FunFam" id="3.40.640.10:FF:000089">
    <property type="entry name" value="Aminotransferase, DegT/DnrJ/EryC1/StrS family"/>
    <property type="match status" value="1"/>
</dbReference>
<dbReference type="Gene3D" id="3.90.1150.10">
    <property type="entry name" value="Aspartate Aminotransferase, domain 1"/>
    <property type="match status" value="1"/>
</dbReference>
<dbReference type="Gene3D" id="3.40.640.10">
    <property type="entry name" value="Type I PLP-dependent aspartate aminotransferase-like (Major domain)"/>
    <property type="match status" value="1"/>
</dbReference>
<dbReference type="InterPro" id="IPR000653">
    <property type="entry name" value="DegT/StrS_aminotransferase"/>
</dbReference>
<dbReference type="InterPro" id="IPR015424">
    <property type="entry name" value="PyrdxlP-dep_Trfase"/>
</dbReference>
<dbReference type="InterPro" id="IPR015421">
    <property type="entry name" value="PyrdxlP-dep_Trfase_major"/>
</dbReference>
<dbReference type="InterPro" id="IPR015422">
    <property type="entry name" value="PyrdxlP-dep_Trfase_small"/>
</dbReference>
<dbReference type="PANTHER" id="PTHR30244:SF36">
    <property type="entry name" value="3-OXO-GLUCOSE-6-PHOSPHATE:GLUTAMATE AMINOTRANSFERASE"/>
    <property type="match status" value="1"/>
</dbReference>
<dbReference type="PANTHER" id="PTHR30244">
    <property type="entry name" value="TRANSAMINASE"/>
    <property type="match status" value="1"/>
</dbReference>
<dbReference type="Pfam" id="PF01041">
    <property type="entry name" value="DegT_DnrJ_EryC1"/>
    <property type="match status" value="1"/>
</dbReference>
<dbReference type="PIRSF" id="PIRSF000390">
    <property type="entry name" value="PLP_StrS"/>
    <property type="match status" value="1"/>
</dbReference>
<dbReference type="SUPFAM" id="SSF53383">
    <property type="entry name" value="PLP-dependent transferases"/>
    <property type="match status" value="1"/>
</dbReference>
<evidence type="ECO:0000250" key="1"/>
<evidence type="ECO:0000255" key="2"/>
<evidence type="ECO:0000305" key="3"/>